<proteinExistence type="inferred from homology"/>
<reference key="1">
    <citation type="submission" date="2007-06" db="EMBL/GenBank/DDBJ databases">
        <title>Complete sequence of Methanococcus maripaludis C7.</title>
        <authorList>
            <consortium name="US DOE Joint Genome Institute"/>
            <person name="Copeland A."/>
            <person name="Lucas S."/>
            <person name="Lapidus A."/>
            <person name="Barry K."/>
            <person name="Glavina del Rio T."/>
            <person name="Dalin E."/>
            <person name="Tice H."/>
            <person name="Pitluck S."/>
            <person name="Clum A."/>
            <person name="Schmutz J."/>
            <person name="Larimer F."/>
            <person name="Land M."/>
            <person name="Hauser L."/>
            <person name="Kyrpides N."/>
            <person name="Anderson I."/>
            <person name="Sieprawska-Lupa M."/>
            <person name="Whitman W.B."/>
            <person name="Richardson P."/>
        </authorList>
    </citation>
    <scope>NUCLEOTIDE SEQUENCE [LARGE SCALE GENOMIC DNA]</scope>
    <source>
        <strain>C7 / ATCC BAA-1331</strain>
    </source>
</reference>
<accession>A6VIU0</accession>
<feature type="chain" id="PRO_1000023839" description="Hydrogenase maturation factor HypA">
    <location>
        <begin position="1"/>
        <end position="126"/>
    </location>
</feature>
<feature type="binding site" evidence="1">
    <location>
        <position position="2"/>
    </location>
    <ligand>
        <name>Ni(2+)</name>
        <dbReference type="ChEBI" id="CHEBI:49786"/>
    </ligand>
</feature>
<feature type="binding site" evidence="1">
    <location>
        <position position="78"/>
    </location>
    <ligand>
        <name>Zn(2+)</name>
        <dbReference type="ChEBI" id="CHEBI:29105"/>
    </ligand>
</feature>
<feature type="binding site" evidence="1">
    <location>
        <position position="81"/>
    </location>
    <ligand>
        <name>Zn(2+)</name>
        <dbReference type="ChEBI" id="CHEBI:29105"/>
    </ligand>
</feature>
<feature type="binding site" evidence="1">
    <location>
        <position position="97"/>
    </location>
    <ligand>
        <name>Zn(2+)</name>
        <dbReference type="ChEBI" id="CHEBI:29105"/>
    </ligand>
</feature>
<feature type="binding site" evidence="1">
    <location>
        <position position="100"/>
    </location>
    <ligand>
        <name>Zn(2+)</name>
        <dbReference type="ChEBI" id="CHEBI:29105"/>
    </ligand>
</feature>
<comment type="function">
    <text evidence="1">Involved in the maturation of [NiFe] hydrogenases. Required for nickel insertion into the metal center of the hydrogenase.</text>
</comment>
<comment type="similarity">
    <text evidence="1">Belongs to the HypA/HybF family.</text>
</comment>
<name>HYPA_METM7</name>
<sequence>MHELSYATSVLNAILEAVEQQEALGRKVIKVNDINLEIGELTLLSVDQLQFVFEVISEDTVCKGAELKAEMVKPKIFCMDCEFEGDLDTKDELEVICPKCESRNVKLKGGKEFNIVNATIEFDDEE</sequence>
<evidence type="ECO:0000255" key="1">
    <source>
        <dbReference type="HAMAP-Rule" id="MF_00213"/>
    </source>
</evidence>
<protein>
    <recommendedName>
        <fullName evidence="1">Hydrogenase maturation factor HypA</fullName>
    </recommendedName>
</protein>
<gene>
    <name evidence="1" type="primary">hypA</name>
    <name type="ordered locus">MmarC7_1303</name>
</gene>
<keyword id="KW-0479">Metal-binding</keyword>
<keyword id="KW-0533">Nickel</keyword>
<keyword id="KW-0862">Zinc</keyword>
<organism>
    <name type="scientific">Methanococcus maripaludis (strain C7 / ATCC BAA-1331)</name>
    <dbReference type="NCBI Taxonomy" id="426368"/>
    <lineage>
        <taxon>Archaea</taxon>
        <taxon>Methanobacteriati</taxon>
        <taxon>Methanobacteriota</taxon>
        <taxon>Methanomada group</taxon>
        <taxon>Methanococci</taxon>
        <taxon>Methanococcales</taxon>
        <taxon>Methanococcaceae</taxon>
        <taxon>Methanococcus</taxon>
    </lineage>
</organism>
<dbReference type="EMBL" id="CP000745">
    <property type="protein sequence ID" value="ABR66366.1"/>
    <property type="molecule type" value="Genomic_DNA"/>
</dbReference>
<dbReference type="SMR" id="A6VIU0"/>
<dbReference type="STRING" id="426368.MmarC7_1303"/>
<dbReference type="KEGG" id="mmz:MmarC7_1303"/>
<dbReference type="eggNOG" id="arCOG04426">
    <property type="taxonomic scope" value="Archaea"/>
</dbReference>
<dbReference type="HOGENOM" id="CLU_126929_2_1_2"/>
<dbReference type="OrthoDB" id="36835at2157"/>
<dbReference type="GO" id="GO:0016151">
    <property type="term" value="F:nickel cation binding"/>
    <property type="evidence" value="ECO:0007669"/>
    <property type="project" value="UniProtKB-UniRule"/>
</dbReference>
<dbReference type="GO" id="GO:0008270">
    <property type="term" value="F:zinc ion binding"/>
    <property type="evidence" value="ECO:0007669"/>
    <property type="project" value="UniProtKB-UniRule"/>
</dbReference>
<dbReference type="GO" id="GO:0051604">
    <property type="term" value="P:protein maturation"/>
    <property type="evidence" value="ECO:0007669"/>
    <property type="project" value="InterPro"/>
</dbReference>
<dbReference type="GO" id="GO:0036211">
    <property type="term" value="P:protein modification process"/>
    <property type="evidence" value="ECO:0007669"/>
    <property type="project" value="UniProtKB-UniRule"/>
</dbReference>
<dbReference type="Gene3D" id="3.30.2320.80">
    <property type="match status" value="1"/>
</dbReference>
<dbReference type="HAMAP" id="MF_00213">
    <property type="entry name" value="HypA_HybF"/>
    <property type="match status" value="1"/>
</dbReference>
<dbReference type="InterPro" id="IPR000688">
    <property type="entry name" value="HypA/HybF"/>
</dbReference>
<dbReference type="NCBIfam" id="TIGR00100">
    <property type="entry name" value="hypA"/>
    <property type="match status" value="1"/>
</dbReference>
<dbReference type="PANTHER" id="PTHR34535">
    <property type="entry name" value="HYDROGENASE MATURATION FACTOR HYPA"/>
    <property type="match status" value="1"/>
</dbReference>
<dbReference type="PANTHER" id="PTHR34535:SF3">
    <property type="entry name" value="HYDROGENASE MATURATION FACTOR HYPA"/>
    <property type="match status" value="1"/>
</dbReference>
<dbReference type="Pfam" id="PF01155">
    <property type="entry name" value="HypA"/>
    <property type="match status" value="1"/>
</dbReference>
<dbReference type="PIRSF" id="PIRSF004761">
    <property type="entry name" value="Hydrgn_mat_HypA"/>
    <property type="match status" value="1"/>
</dbReference>